<sequence>MMNHPHSSHIGTTNVKEEIGKLDRIRISGIGLIAYAFMAVLLIIAISTKTLPNTMIGAIFALVLMGHVFYYLGAHLPIFRSYLGGGSVFTILLTAILVATNVIPKYVVTTASGFINGMDFLGLYIVSLIASSLFKMDRKMLLKAAVRFLPVAFISMALTAVVIGIVGVIIGVGFNYAILYIAMPIMAGGVGAGIVPLSGIYAHAMGVGSAGILSKLFPTVILGNLLAIISAGLISRIFKDSKGNGHGEILRGEREKSAAAEEIKPDYVQLGVGLIIAVMFFMIGTMLNKVFPGINAYAFIILSIVLTKAFGLLPKYYEDSVIMFGQVIVKNMTHALLAGVGLSLLDMHVLLAALSWQFVVLCLVSIVAISLISATLGKLFGLYPVEAAITAGLANNSMGGTGNVAVLAASERMNLIAFAQMGNRIGGALILVVAGILVTFMK</sequence>
<reference key="1">
    <citation type="journal article" date="1990" name="J. Bacteriol.">
        <title>Nucleotide sequence and expression in Escherichia coli of the Lactococcus lactis citrate permease gene.</title>
        <authorList>
            <person name="David S."/>
            <person name="van der Rest M.E."/>
            <person name="Driessen A.J.M."/>
            <person name="Simons G."/>
            <person name="de Vos W.M."/>
        </authorList>
    </citation>
    <scope>NUCLEOTIDE SEQUENCE [GENOMIC DNA]</scope>
    <scope>FUNCTION IN CITRATE TRANSPORT</scope>
    <source>
        <strain>Diacetylactis / DSM 20661 / NCDO 176</strain>
        <plasmid>pCT176</plasmid>
    </source>
</reference>
<reference key="2">
    <citation type="journal article" date="1994" name="FEMS Microbiol. Lett.">
        <title>Citrate transport in Lactococcus lactis biovar diacetylactis: Expression of the plasmid-borne citrate permease P.</title>
        <authorList>
            <person name="Magni C."/>
            <person name="Lopez de Felipe F."/>
            <person name="Sesma F."/>
            <person name="Lopez P."/>
            <person name="de Mendoza D."/>
        </authorList>
    </citation>
    <scope>FUNCTION IN CITRATE TRANSPORT</scope>
    <scope>ACTIVITY REGULATION</scope>
    <scope>TRANSCRIPTIONAL REGULATION</scope>
    <source>
        <strain>Diacetylactis / CRL264</strain>
        <plasmid>pCIT264</plasmid>
    </source>
</reference>
<reference key="3">
    <citation type="journal article" date="1995" name="Mol. Gen. Genet.">
        <title>Citrate utilization gene cluster of the Lactococcus lactis biovar diacetylactis: organization and regulation of expression.</title>
        <authorList>
            <person name="Lopez de Felipe F."/>
            <person name="Magni C."/>
            <person name="de Mendoza D."/>
            <person name="Lopez P."/>
        </authorList>
    </citation>
    <scope>REGULATION OF EXPRESSION</scope>
    <source>
        <strain>Diacetylactis / CRL264</strain>
        <plasmid>pCIT264</plasmid>
    </source>
</reference>
<reference key="4">
    <citation type="journal article" date="1998" name="Appl. Environ. Microbiol.">
        <title>The citrate transport system of Lactococcus lactis subsp. lactis biovar diacetylactis is induced by acid stress.</title>
        <authorList>
            <person name="Garcia-Quintans N."/>
            <person name="Magni C."/>
            <person name="de Mendoza D."/>
            <person name="Lopez P."/>
        </authorList>
    </citation>
    <scope>INDUCTION BY ACID STRESS</scope>
    <source>
        <strain>Diacetylactis / CRL264</strain>
        <plasmid>pCIT264</plasmid>
    </source>
</reference>
<reference key="5">
    <citation type="journal article" date="1998" name="Appl. Environ. Microbiol.">
        <title>Mechanism of the citrate transporters in carbohydrate and citrate cometabolism in Lactococcus and Leuconostoc species.</title>
        <authorList>
            <person name="Bandell M."/>
            <person name="Lhotte M.E."/>
            <person name="Marty-Teysset C."/>
            <person name="Veyrat A."/>
            <person name="Prevost H."/>
            <person name="Dartois V."/>
            <person name="Divies C."/>
            <person name="Konings W.N."/>
            <person name="Lolkema J.S."/>
        </authorList>
    </citation>
    <scope>FUNCTION</scope>
    <scope>TRANSPORTER ACTIVITY</scope>
    <scope>SUBCELLULAR LOCATION</scope>
    <source>
        <strain>Diacetylactis / DSM 20661 / NCDO 176</strain>
        <plasmid>pCT176</plasmid>
    </source>
</reference>
<reference key="6">
    <citation type="journal article" date="1999" name="J. Bacteriol.">
        <title>Mechanism of citrate metabolism in Lactococcus lactis: resistance against lactate toxicity at low pH.</title>
        <authorList>
            <person name="Magni C."/>
            <person name="de Mendoza D."/>
            <person name="Konings W.N."/>
            <person name="Lolkema J.S."/>
        </authorList>
    </citation>
    <scope>FUNCTION</scope>
    <scope>TRANSPORTER ACTIVITY</scope>
    <scope>INDUCTION BY ACID STRESS</scope>
    <source>
        <strain>Diacetylactis / CRL264</strain>
        <plasmid>pCIT264</plasmid>
    </source>
</reference>
<reference key="7">
    <citation type="journal article" date="2011" name="J. Bacteriol.">
        <title>Citrate uptake in exchange with intermediates in the citrate metabolic pathway in Lactococcus lactis IL1403.</title>
        <authorList>
            <person name="Pudlik A.M."/>
            <person name="Lolkema J.S."/>
        </authorList>
    </citation>
    <scope>FUNCTION</scope>
    <source>
        <strain>Diacetylactis / CRL264</strain>
        <plasmid>pCIT264</plasmid>
    </source>
</reference>
<reference key="8">
    <citation type="journal article" date="2012" name="J. Bacteriol.">
        <title>Substrate specificity of the citrate transporter CitP of Lactococcus lactis.</title>
        <authorList>
            <person name="Pudlik A.M."/>
            <person name="Lolkema J.S."/>
        </authorList>
    </citation>
    <scope>FUNCTION</scope>
    <scope>TRANSPORTER ACTIVITY</scope>
    <source>
        <strain>Diacetylactis / CRL264</strain>
        <plasmid>pCIT264</plasmid>
    </source>
</reference>
<reference key="9">
    <citation type="journal article" date="2018" name="Microb. Biotechnol.">
        <title>Citrate, low pH and amino acid limitation induce citrate utilization in Lactococcus lactis biovar diacetylactis.</title>
        <authorList>
            <person name="van Mastrigt O."/>
            <person name="Mager E.E."/>
            <person name="Jamin C."/>
            <person name="Abee T."/>
            <person name="Smid E.J."/>
        </authorList>
    </citation>
    <scope>INDUCTION</scope>
    <source>
        <strain>Diacetylactis / FM03-V1</strain>
    </source>
</reference>
<comment type="function">
    <text evidence="2 3 4 5 9 10">Secondary transporter involved in citrate metabolism (PubMed:10049375, PubMed:2120190, PubMed:9572922, Ref.2). During cometabolism of citrate and glucose, catalyzes the uptake of divalent citrate into the cell coupled to the exit of monovalent lactate, the end product of glycolysis in L.lactis (PubMed:10049375, PubMed:9572922). The citrate/lactate exchange is electrogenic and results in the generation of a membrane potential (PubMed:10049375, PubMed:9572922). Plays an important role in resistance against lactate toxicity at low pH (PubMed:10049375). In the absence of glucose, i.e. when no lactate is produced, CitP catalyzes the uptake of citrate in exchange with the citrate metabolism intermediates pyruvate and alpha-acetolactate, and the end product acetate (PubMed:21115655). In the absence of glucose, CitP can also catalyze the proton-dependent transport of citrate (PubMed:2120190, PubMed:22563050). In vitro, shows a broad substrate specificity (PubMed:22563050). Can transport a wide variety of mono- and dicarboxylates of the form X-CR(2)-COO(-), where X represents OH (2-hydroxy acid), O (2-keto acid), or H (acid) and R groups differ in size, hydrophobicity and composition (PubMed:22563050). Many of the substrates are intermediates or products of amino acid metabolism, suggesting that CitP may have a broader physiological function than its role in citrate metabolism (PubMed:22563050).</text>
</comment>
<comment type="catalytic activity">
    <reaction evidence="9 15">
        <text>(R)-lactate(in) + citrate(out) = (R)-lactate(out) + citrate(in)</text>
        <dbReference type="Rhea" id="RHEA:79491"/>
        <dbReference type="ChEBI" id="CHEBI:16004"/>
        <dbReference type="ChEBI" id="CHEBI:16947"/>
    </reaction>
    <physiologicalReaction direction="left-to-right" evidence="9 15">
        <dbReference type="Rhea" id="RHEA:79492"/>
    </physiologicalReaction>
</comment>
<comment type="catalytic activity">
    <reaction evidence="15">
        <text>(S)-lactate(in) + citrate(out) = (S)-lactate(out) + citrate(in)</text>
        <dbReference type="Rhea" id="RHEA:79487"/>
        <dbReference type="ChEBI" id="CHEBI:16651"/>
        <dbReference type="ChEBI" id="CHEBI:16947"/>
    </reaction>
    <physiologicalReaction direction="left-to-right" evidence="15">
        <dbReference type="Rhea" id="RHEA:79488"/>
    </physiologicalReaction>
</comment>
<comment type="catalytic activity">
    <reaction evidence="5 16">
        <text>citrate(in) + H(+)(in) = citrate(out) + H(+)(out)</text>
        <dbReference type="Rhea" id="RHEA:32123"/>
        <dbReference type="ChEBI" id="CHEBI:15378"/>
        <dbReference type="ChEBI" id="CHEBI:16947"/>
    </reaction>
    <physiologicalReaction direction="right-to-left" evidence="5">
        <dbReference type="Rhea" id="RHEA:32125"/>
    </physiologicalReaction>
</comment>
<comment type="activity regulation">
    <text evidence="10">The transport of citrate is unaffected by the presence of citrate in the growth media.</text>
</comment>
<comment type="subcellular location">
    <subcellularLocation>
        <location evidence="9 16">Cell membrane</location>
        <topology evidence="1">Multi-pass membrane protein</topology>
    </subcellularLocation>
</comment>
<comment type="induction">
    <text evidence="2 6 7 8 10">Constitutively expressed at neutral pH values (PubMed:10049375). Expression is increased at low pH (PubMed:10049375, PubMed:29215194, PubMed:9501425). Magni et al show that expression is not affected when L.lactis is grown on M17 medium with or without supplementation of citrate (Ref.2). However, it was shown later that transcription is higher in the presence of citrate (PubMed:29215194). Expression is also induced by amino acid limitation (PubMed:29215194). Expression of the cit cluster is controlled at the post-transcriptional level by mRNA processing at a putative complex secondary structure and by translational repression mediated by the CitR regulatory protein (PubMed:7535377). Processing of the mRNAs is not affected by either pH, nutrient limitation or the presence of citrate in the medium (PubMed:29215194).</text>
</comment>
<comment type="similarity">
    <text evidence="14">Belongs to the 2-hydroxycarboxylate transporter (2-HCT) (TC 2.A.24) family.</text>
</comment>
<evidence type="ECO:0000255" key="1"/>
<evidence type="ECO:0000269" key="2">
    <source>
    </source>
</evidence>
<evidence type="ECO:0000269" key="3">
    <source>
    </source>
</evidence>
<evidence type="ECO:0000269" key="4">
    <source>
    </source>
</evidence>
<evidence type="ECO:0000269" key="5">
    <source>
    </source>
</evidence>
<evidence type="ECO:0000269" key="6">
    <source>
    </source>
</evidence>
<evidence type="ECO:0000269" key="7">
    <source>
    </source>
</evidence>
<evidence type="ECO:0000269" key="8">
    <source>
    </source>
</evidence>
<evidence type="ECO:0000269" key="9">
    <source>
    </source>
</evidence>
<evidence type="ECO:0000269" key="10">
    <source ref="2"/>
</evidence>
<evidence type="ECO:0000303" key="11">
    <source>
    </source>
</evidence>
<evidence type="ECO:0000303" key="12">
    <source>
    </source>
</evidence>
<evidence type="ECO:0000303" key="13">
    <source ref="2"/>
</evidence>
<evidence type="ECO:0000305" key="14"/>
<evidence type="ECO:0000305" key="15">
    <source>
    </source>
</evidence>
<evidence type="ECO:0000305" key="16">
    <source>
    </source>
</evidence>
<dbReference type="EMBL" id="M58694">
    <property type="protein sequence ID" value="AAA25165.1"/>
    <property type="molecule type" value="Genomic_DNA"/>
</dbReference>
<dbReference type="PIR" id="A36136">
    <property type="entry name" value="A36136"/>
</dbReference>
<dbReference type="RefSeq" id="NP_258266.1">
    <property type="nucleotide sequence ID" value="NC_003101.1"/>
</dbReference>
<dbReference type="RefSeq" id="WP_010976688.1">
    <property type="nucleotide sequence ID" value="NZ_JAHIBO010000067.1"/>
</dbReference>
<dbReference type="RefSeq" id="YP_005869744.1">
    <property type="nucleotide sequence ID" value="NC_017489.1"/>
</dbReference>
<dbReference type="SMR" id="P21608"/>
<dbReference type="TCDB" id="2.A.24.3.1">
    <property type="family name" value="the 2-hydroxycarboxylate transporter (2-hct) family"/>
</dbReference>
<dbReference type="PRO" id="PR:P21608"/>
<dbReference type="GO" id="GO:0005886">
    <property type="term" value="C:plasma membrane"/>
    <property type="evidence" value="ECO:0007669"/>
    <property type="project" value="UniProtKB-SubCell"/>
</dbReference>
<dbReference type="GO" id="GO:0015297">
    <property type="term" value="F:antiporter activity"/>
    <property type="evidence" value="ECO:0007669"/>
    <property type="project" value="UniProtKB-KW"/>
</dbReference>
<dbReference type="GO" id="GO:0008514">
    <property type="term" value="F:organic anion transmembrane transporter activity"/>
    <property type="evidence" value="ECO:0007669"/>
    <property type="project" value="InterPro"/>
</dbReference>
<dbReference type="GO" id="GO:0015293">
    <property type="term" value="F:symporter activity"/>
    <property type="evidence" value="ECO:0007669"/>
    <property type="project" value="UniProtKB-KW"/>
</dbReference>
<dbReference type="GO" id="GO:0006101">
    <property type="term" value="P:citrate metabolic process"/>
    <property type="evidence" value="ECO:0007669"/>
    <property type="project" value="UniProtKB-KW"/>
</dbReference>
<dbReference type="InterPro" id="IPR018025">
    <property type="entry name" value="2-OHcarbox_trans_Prot/Firm"/>
</dbReference>
<dbReference type="InterPro" id="IPR004679">
    <property type="entry name" value="2-OHcarboxylate_transport"/>
</dbReference>
<dbReference type="NCBIfam" id="TIGR00783">
    <property type="entry name" value="ccs"/>
    <property type="match status" value="1"/>
</dbReference>
<dbReference type="PANTHER" id="PTHR40033:SF1">
    <property type="entry name" value="CITRATE-SODIUM SYMPORTER"/>
    <property type="match status" value="1"/>
</dbReference>
<dbReference type="PANTHER" id="PTHR40033">
    <property type="entry name" value="NA(+)-MALATE SYMPORTER"/>
    <property type="match status" value="1"/>
</dbReference>
<dbReference type="Pfam" id="PF03390">
    <property type="entry name" value="2HCT"/>
    <property type="match status" value="1"/>
</dbReference>
<dbReference type="PIRSF" id="PIRSF005348">
    <property type="entry name" value="YxkH"/>
    <property type="match status" value="1"/>
</dbReference>
<dbReference type="PRINTS" id="PR00303">
    <property type="entry name" value="SECYTRNLCASE"/>
</dbReference>
<proteinExistence type="evidence at protein level"/>
<organism>
    <name type="scientific">Lactococcus lactis subsp. lactis</name>
    <name type="common">Streptococcus lactis</name>
    <dbReference type="NCBI Taxonomy" id="1360"/>
    <lineage>
        <taxon>Bacteria</taxon>
        <taxon>Bacillati</taxon>
        <taxon>Bacillota</taxon>
        <taxon>Bacilli</taxon>
        <taxon>Lactobacillales</taxon>
        <taxon>Streptococcaceae</taxon>
        <taxon>Lactococcus</taxon>
    </lineage>
</organism>
<gene>
    <name evidence="11" type="primary">citP</name>
</gene>
<accession>P21608</accession>
<geneLocation type="plasmid">
    <name>pCT176</name>
</geneLocation>
<geneLocation type="plasmid">
    <name>pCIT264</name>
</geneLocation>
<name>CITP_LACLL</name>
<protein>
    <recommendedName>
        <fullName evidence="12">Citrate transporter CitP</fullName>
    </recommendedName>
    <alternativeName>
        <fullName>Citrate carrier</fullName>
    </alternativeName>
    <alternativeName>
        <fullName evidence="13">Citrate permease P</fullName>
    </alternativeName>
    <alternativeName>
        <fullName evidence="14">Citrate/lactate antiporter</fullName>
    </alternativeName>
</protein>
<feature type="chain" id="PRO_0000088756" description="Citrate transporter CitP">
    <location>
        <begin position="1"/>
        <end position="442"/>
    </location>
</feature>
<feature type="transmembrane region" description="Helical" evidence="1">
    <location>
        <begin position="27"/>
        <end position="47"/>
    </location>
</feature>
<feature type="transmembrane region" description="Helical" evidence="1">
    <location>
        <begin position="59"/>
        <end position="79"/>
    </location>
</feature>
<feature type="transmembrane region" description="Helical" evidence="1">
    <location>
        <begin position="83"/>
        <end position="103"/>
    </location>
</feature>
<feature type="transmembrane region" description="Helical" evidence="1">
    <location>
        <begin position="114"/>
        <end position="134"/>
    </location>
</feature>
<feature type="transmembrane region" description="Helical" evidence="1">
    <location>
        <begin position="151"/>
        <end position="171"/>
    </location>
</feature>
<feature type="transmembrane region" description="Helical" evidence="1">
    <location>
        <begin position="177"/>
        <end position="197"/>
    </location>
</feature>
<feature type="transmembrane region" description="Helical" evidence="1">
    <location>
        <begin position="209"/>
        <end position="229"/>
    </location>
</feature>
<feature type="transmembrane region" description="Helical" evidence="1">
    <location>
        <begin position="267"/>
        <end position="287"/>
    </location>
</feature>
<feature type="transmembrane region" description="Helical" evidence="1">
    <location>
        <begin position="293"/>
        <end position="313"/>
    </location>
</feature>
<feature type="transmembrane region" description="Helical" evidence="1">
    <location>
        <begin position="321"/>
        <end position="341"/>
    </location>
</feature>
<feature type="transmembrane region" description="Helical" evidence="1">
    <location>
        <begin position="349"/>
        <end position="369"/>
    </location>
</feature>
<feature type="transmembrane region" description="Helical" evidence="1">
    <location>
        <begin position="387"/>
        <end position="409"/>
    </location>
</feature>
<feature type="transmembrane region" description="Helical" evidence="1">
    <location>
        <begin position="421"/>
        <end position="441"/>
    </location>
</feature>
<keyword id="KW-0050">Antiport</keyword>
<keyword id="KW-1003">Cell membrane</keyword>
<keyword id="KW-0163">Citrate utilization</keyword>
<keyword id="KW-0472">Membrane</keyword>
<keyword id="KW-0614">Plasmid</keyword>
<keyword id="KW-0346">Stress response</keyword>
<keyword id="KW-0769">Symport</keyword>
<keyword id="KW-0812">Transmembrane</keyword>
<keyword id="KW-1133">Transmembrane helix</keyword>
<keyword id="KW-0813">Transport</keyword>